<sequence length="180" mass="20633">MAEDDMCSLFFKLKVEDVTCSDDPEKHMKNASNERKPLIEPVENQLMDIDDEGGSVDHGLLYLYVDCRTMMCCFHRGSLPYNWMQGALLTNLPPYQHDVTLDEVNRGLKQALGFFGYADPMRTPYFTAFSFPGRVIKLNEQMELTSTKGKCLKFDLYASTHLRFKPDELVRHGECKFAIG</sequence>
<accession>I6LJ77</accession>
<keyword id="KW-0203">Cytokinin biosynthesis</keyword>
<keyword id="KW-0326">Glycosidase</keyword>
<keyword id="KW-0378">Hydrolase</keyword>
<proteinExistence type="inferred from homology"/>
<evidence type="ECO:0000250" key="1"/>
<comment type="function">
    <text evidence="1">Hydrolyzes cytokinin glucosides thus liberating free cytokinins.</text>
</comment>
<feature type="chain" id="PRO_0000421064" description="Cytokinin-beta-glucosidase 2">
    <location>
        <begin position="1"/>
        <end position="180"/>
    </location>
</feature>
<gene>
    <name type="primary">ROLC2</name>
</gene>
<reference key="1">
    <citation type="submission" date="2011-02" db="EMBL/GenBank/DDBJ databases">
        <title>Linaria vulgaris contains T-DNA from Agrobacterium rhizogenes.</title>
        <authorList>
            <person name="Matveeva T.V."/>
            <person name="Bogomaz D.I."/>
            <person name="Pavlova O.A."/>
            <person name="Nester E.W."/>
            <person name="Lutova L.A."/>
        </authorList>
    </citation>
    <scope>NUCLEOTIDE SEQUENCE [GENOMIC DNA]</scope>
</reference>
<organism>
    <name type="scientific">Linaria vulgaris</name>
    <name type="common">Toadflax</name>
    <dbReference type="NCBI Taxonomy" id="43171"/>
    <lineage>
        <taxon>Eukaryota</taxon>
        <taxon>Viridiplantae</taxon>
        <taxon>Streptophyta</taxon>
        <taxon>Embryophyta</taxon>
        <taxon>Tracheophyta</taxon>
        <taxon>Spermatophyta</taxon>
        <taxon>Magnoliopsida</taxon>
        <taxon>eudicotyledons</taxon>
        <taxon>Gunneridae</taxon>
        <taxon>Pentapetalae</taxon>
        <taxon>asterids</taxon>
        <taxon>lamiids</taxon>
        <taxon>Lamiales</taxon>
        <taxon>Plantaginaceae</taxon>
        <taxon>Antirrhineae</taxon>
        <taxon>Linaria</taxon>
    </lineage>
</organism>
<protein>
    <recommendedName>
        <fullName>Cytokinin-beta-glucosidase 2</fullName>
        <ecNumber>3.2.1.-</ecNumber>
    </recommendedName>
    <alternativeName>
        <fullName>Protein ROL C 2</fullName>
    </alternativeName>
</protein>
<name>ROLC2_LINVU</name>
<dbReference type="EC" id="3.2.1.-"/>
<dbReference type="EMBL" id="EU735069">
    <property type="protein sequence ID" value="ACD81987.1"/>
    <property type="molecule type" value="Genomic_DNA"/>
</dbReference>
<dbReference type="SMR" id="I6LJ77"/>
<dbReference type="GO" id="GO:0008422">
    <property type="term" value="F:beta-glucosidase activity"/>
    <property type="evidence" value="ECO:0007669"/>
    <property type="project" value="InterPro"/>
</dbReference>
<dbReference type="GO" id="GO:0005975">
    <property type="term" value="P:carbohydrate metabolic process"/>
    <property type="evidence" value="ECO:0007669"/>
    <property type="project" value="InterPro"/>
</dbReference>
<dbReference type="GO" id="GO:0009691">
    <property type="term" value="P:cytokinin biosynthetic process"/>
    <property type="evidence" value="ECO:0007669"/>
    <property type="project" value="UniProtKB-KW"/>
</dbReference>
<dbReference type="InterPro" id="IPR006065">
    <property type="entry name" value="Glyco_hydro_41"/>
</dbReference>
<dbReference type="InterPro" id="IPR006064">
    <property type="entry name" value="Glycosidase"/>
</dbReference>
<dbReference type="Pfam" id="PF02027">
    <property type="entry name" value="RolB_RolC"/>
    <property type="match status" value="1"/>
</dbReference>
<dbReference type="PRINTS" id="PR00746">
    <property type="entry name" value="GLHYDRLASE41"/>
</dbReference>